<gene>
    <name type="ordered locus">VACWR014</name>
</gene>
<comment type="function">
    <text>May be involved in virus-host protein interaction through the ankyrin repeats.</text>
</comment>
<accession>P17369</accession>
<accession>Q76ZZ2</accession>
<reference key="1">
    <citation type="journal article" date="1988" name="Virology">
        <title>Analysis of a large cluster of nonessential genes deleted from a vaccinia virus terminal transposition mutant.</title>
        <authorList>
            <person name="Kotwal G.J."/>
            <person name="Moss B."/>
        </authorList>
    </citation>
    <scope>NUCLEOTIDE SEQUENCE [GENOMIC DNA]</scope>
</reference>
<reference key="2">
    <citation type="submission" date="2003-02" db="EMBL/GenBank/DDBJ databases">
        <title>Sequencing of the coding region of Vaccinia-WR to an average 9-fold redundancy and an error rate of 0.16/10kb.</title>
        <authorList>
            <person name="Esposito J.J."/>
            <person name="Frace A.M."/>
            <person name="Sammons S.A."/>
            <person name="Olsen-Rasmussen M."/>
            <person name="Osborne J."/>
            <person name="Wohlhueter R."/>
        </authorList>
    </citation>
    <scope>NUCLEOTIDE SEQUENCE [GENOMIC DNA]</scope>
</reference>
<proteinExistence type="predicted"/>
<sequence>MSYACPILSTINICLPYLKDINMIDKRGETLLHKAVRYNKQSLVSLLLESGSDVNIRSNNGYTCIAIAINESRNIELLKMLLCHKPTLDCVIDSLREISNIVDNYYAIKQCIKYAMIIDDCTSSKIPESISQRYNDYIDLCNQELNEMKKIMVGGNTMFSLIFTDHGAKIIHRYANNPELREYYELKQNKIYVEAYDIISDAIVKHDRIHKTIESVDDNTYISNLPYTIKYKIFEQQ</sequence>
<feature type="chain" id="PRO_0000067097" description="Ankyrin repeat protein 14">
    <location>
        <begin position="1"/>
        <end position="237"/>
    </location>
</feature>
<feature type="repeat" description="ANK 1">
    <location>
        <begin position="27"/>
        <end position="56"/>
    </location>
</feature>
<feature type="repeat" description="ANK 2">
    <location>
        <begin position="60"/>
        <end position="90"/>
    </location>
</feature>
<protein>
    <recommendedName>
        <fullName>Ankyrin repeat protein 14</fullName>
    </recommendedName>
</protein>
<organism>
    <name type="scientific">Vaccinia virus (strain Western Reserve)</name>
    <name type="common">VACV</name>
    <name type="synonym">Vaccinia virus (strain WR)</name>
    <dbReference type="NCBI Taxonomy" id="10254"/>
    <lineage>
        <taxon>Viruses</taxon>
        <taxon>Varidnaviria</taxon>
        <taxon>Bamfordvirae</taxon>
        <taxon>Nucleocytoviricota</taxon>
        <taxon>Pokkesviricetes</taxon>
        <taxon>Chitovirales</taxon>
        <taxon>Poxviridae</taxon>
        <taxon>Chordopoxvirinae</taxon>
        <taxon>Orthopoxvirus</taxon>
        <taxon>Vaccinia virus</taxon>
    </lineage>
</organism>
<organismHost>
    <name type="scientific">Bos taurus</name>
    <name type="common">Bovine</name>
    <dbReference type="NCBI Taxonomy" id="9913"/>
</organismHost>
<dbReference type="EMBL" id="M22812">
    <property type="protein sequence ID" value="AAA69594.1"/>
    <property type="molecule type" value="Genomic_DNA"/>
</dbReference>
<dbReference type="EMBL" id="AY243312">
    <property type="protein sequence ID" value="AAO89293.1"/>
    <property type="molecule type" value="Genomic_DNA"/>
</dbReference>
<dbReference type="PIR" id="C31829">
    <property type="entry name" value="WZVZA3"/>
</dbReference>
<dbReference type="RefSeq" id="YP_232896.1">
    <property type="nucleotide sequence ID" value="NC_006998.1"/>
</dbReference>
<dbReference type="SMR" id="P17369"/>
<dbReference type="DNASU" id="3707629"/>
<dbReference type="GeneID" id="3707629"/>
<dbReference type="KEGG" id="vg:3707629"/>
<dbReference type="Proteomes" id="UP000000344">
    <property type="component" value="Genome"/>
</dbReference>
<dbReference type="Gene3D" id="1.25.40.20">
    <property type="entry name" value="Ankyrin repeat-containing domain"/>
    <property type="match status" value="1"/>
</dbReference>
<dbReference type="InterPro" id="IPR051637">
    <property type="entry name" value="Ank_repeat_dom-contain_49"/>
</dbReference>
<dbReference type="InterPro" id="IPR002110">
    <property type="entry name" value="Ankyrin_rpt"/>
</dbReference>
<dbReference type="InterPro" id="IPR036770">
    <property type="entry name" value="Ankyrin_rpt-contain_sf"/>
</dbReference>
<dbReference type="InterPro" id="IPR018272">
    <property type="entry name" value="PRANC_domain"/>
</dbReference>
<dbReference type="PANTHER" id="PTHR24180">
    <property type="entry name" value="CYCLIN-DEPENDENT KINASE INHIBITOR 2C-RELATED"/>
    <property type="match status" value="1"/>
</dbReference>
<dbReference type="PANTHER" id="PTHR24180:SF45">
    <property type="entry name" value="POLY [ADP-RIBOSE] POLYMERASE TANKYRASE"/>
    <property type="match status" value="1"/>
</dbReference>
<dbReference type="Pfam" id="PF12796">
    <property type="entry name" value="Ank_2"/>
    <property type="match status" value="1"/>
</dbReference>
<dbReference type="Pfam" id="PF09372">
    <property type="entry name" value="PRANC"/>
    <property type="match status" value="1"/>
</dbReference>
<dbReference type="SMART" id="SM00248">
    <property type="entry name" value="ANK"/>
    <property type="match status" value="2"/>
</dbReference>
<dbReference type="SUPFAM" id="SSF48403">
    <property type="entry name" value="Ankyrin repeat"/>
    <property type="match status" value="1"/>
</dbReference>
<dbReference type="PROSITE" id="PS50297">
    <property type="entry name" value="ANK_REP_REGION"/>
    <property type="match status" value="1"/>
</dbReference>
<dbReference type="PROSITE" id="PS50088">
    <property type="entry name" value="ANK_REPEAT"/>
    <property type="match status" value="1"/>
</dbReference>
<keyword id="KW-0040">ANK repeat</keyword>
<keyword id="KW-0244">Early protein</keyword>
<keyword id="KW-1185">Reference proteome</keyword>
<keyword id="KW-0677">Repeat</keyword>
<name>V14_VACCW</name>